<feature type="chain" id="PRO_1000200512" description="Uridine kinase">
    <location>
        <begin position="1"/>
        <end position="208"/>
    </location>
</feature>
<feature type="binding site" evidence="1">
    <location>
        <begin position="11"/>
        <end position="18"/>
    </location>
    <ligand>
        <name>ATP</name>
        <dbReference type="ChEBI" id="CHEBI:30616"/>
    </ligand>
</feature>
<keyword id="KW-0067">ATP-binding</keyword>
<keyword id="KW-0963">Cytoplasm</keyword>
<keyword id="KW-0418">Kinase</keyword>
<keyword id="KW-0547">Nucleotide-binding</keyword>
<keyword id="KW-1185">Reference proteome</keyword>
<keyword id="KW-0808">Transferase</keyword>
<organism>
    <name type="scientific">Clostridium novyi (strain NT)</name>
    <dbReference type="NCBI Taxonomy" id="386415"/>
    <lineage>
        <taxon>Bacteria</taxon>
        <taxon>Bacillati</taxon>
        <taxon>Bacillota</taxon>
        <taxon>Clostridia</taxon>
        <taxon>Eubacteriales</taxon>
        <taxon>Clostridiaceae</taxon>
        <taxon>Clostridium</taxon>
    </lineage>
</organism>
<evidence type="ECO:0000255" key="1">
    <source>
        <dbReference type="HAMAP-Rule" id="MF_00551"/>
    </source>
</evidence>
<reference key="1">
    <citation type="journal article" date="2006" name="Nat. Biotechnol.">
        <title>The genome and transcriptomes of the anti-tumor agent Clostridium novyi-NT.</title>
        <authorList>
            <person name="Bettegowda C."/>
            <person name="Huang X."/>
            <person name="Lin J."/>
            <person name="Cheong I."/>
            <person name="Kohli M."/>
            <person name="Szabo S.A."/>
            <person name="Zhang X."/>
            <person name="Diaz L.A. Jr."/>
            <person name="Velculescu V.E."/>
            <person name="Parmigiani G."/>
            <person name="Kinzler K.W."/>
            <person name="Vogelstein B."/>
            <person name="Zhou S."/>
        </authorList>
    </citation>
    <scope>NUCLEOTIDE SEQUENCE [LARGE SCALE GENOMIC DNA]</scope>
    <source>
        <strain>NT</strain>
    </source>
</reference>
<protein>
    <recommendedName>
        <fullName evidence="1">Uridine kinase</fullName>
        <ecNumber evidence="1">2.7.1.48</ecNumber>
    </recommendedName>
    <alternativeName>
        <fullName evidence="1">Cytidine monophosphokinase</fullName>
    </alternativeName>
    <alternativeName>
        <fullName evidence="1">Uridine monophosphokinase</fullName>
    </alternativeName>
</protein>
<comment type="catalytic activity">
    <reaction evidence="1">
        <text>uridine + ATP = UMP + ADP + H(+)</text>
        <dbReference type="Rhea" id="RHEA:16825"/>
        <dbReference type="ChEBI" id="CHEBI:15378"/>
        <dbReference type="ChEBI" id="CHEBI:16704"/>
        <dbReference type="ChEBI" id="CHEBI:30616"/>
        <dbReference type="ChEBI" id="CHEBI:57865"/>
        <dbReference type="ChEBI" id="CHEBI:456216"/>
        <dbReference type="EC" id="2.7.1.48"/>
    </reaction>
</comment>
<comment type="catalytic activity">
    <reaction evidence="1">
        <text>cytidine + ATP = CMP + ADP + H(+)</text>
        <dbReference type="Rhea" id="RHEA:24674"/>
        <dbReference type="ChEBI" id="CHEBI:15378"/>
        <dbReference type="ChEBI" id="CHEBI:17562"/>
        <dbReference type="ChEBI" id="CHEBI:30616"/>
        <dbReference type="ChEBI" id="CHEBI:60377"/>
        <dbReference type="ChEBI" id="CHEBI:456216"/>
        <dbReference type="EC" id="2.7.1.48"/>
    </reaction>
</comment>
<comment type="pathway">
    <text evidence="1">Pyrimidine metabolism; CTP biosynthesis via salvage pathway; CTP from cytidine: step 1/3.</text>
</comment>
<comment type="pathway">
    <text evidence="1">Pyrimidine metabolism; UMP biosynthesis via salvage pathway; UMP from uridine: step 1/1.</text>
</comment>
<comment type="subcellular location">
    <subcellularLocation>
        <location evidence="1">Cytoplasm</location>
    </subcellularLocation>
</comment>
<comment type="similarity">
    <text evidence="1">Belongs to the uridine kinase family.</text>
</comment>
<sequence>MMRPILIGITGGTGSGKSTVANEIYESFKDDCIAIIEQDSYYKDQSHLTFEDRIKTNYDHPNAFDTELLVEHLKELSKGNTINKPIYDFKEHTRKKEVVEVKAKDIIIVEGIMILQDVELRNLLDIKIYVDTDDDVRIIRRILRDIKERGRTIDSVVDQYLGVVKPMHSQFIEPTKKYADIIIPEGGQNKVAIDIMVSKIKQILSENK</sequence>
<accession>A0Q140</accession>
<name>URK_CLONN</name>
<dbReference type="EC" id="2.7.1.48" evidence="1"/>
<dbReference type="EMBL" id="CP000382">
    <property type="protein sequence ID" value="ABK61121.1"/>
    <property type="molecule type" value="Genomic_DNA"/>
</dbReference>
<dbReference type="RefSeq" id="WP_011722338.1">
    <property type="nucleotide sequence ID" value="NC_008593.1"/>
</dbReference>
<dbReference type="SMR" id="A0Q140"/>
<dbReference type="STRING" id="386415.NT01CX_2269"/>
<dbReference type="KEGG" id="cno:NT01CX_2269"/>
<dbReference type="eggNOG" id="COG0572">
    <property type="taxonomic scope" value="Bacteria"/>
</dbReference>
<dbReference type="HOGENOM" id="CLU_021278_1_2_9"/>
<dbReference type="UniPathway" id="UPA00574">
    <property type="reaction ID" value="UER00637"/>
</dbReference>
<dbReference type="UniPathway" id="UPA00579">
    <property type="reaction ID" value="UER00640"/>
</dbReference>
<dbReference type="Proteomes" id="UP000008220">
    <property type="component" value="Chromosome"/>
</dbReference>
<dbReference type="GO" id="GO:0005737">
    <property type="term" value="C:cytoplasm"/>
    <property type="evidence" value="ECO:0007669"/>
    <property type="project" value="UniProtKB-SubCell"/>
</dbReference>
<dbReference type="GO" id="GO:0005524">
    <property type="term" value="F:ATP binding"/>
    <property type="evidence" value="ECO:0007669"/>
    <property type="project" value="UniProtKB-UniRule"/>
</dbReference>
<dbReference type="GO" id="GO:0043771">
    <property type="term" value="F:cytidine kinase activity"/>
    <property type="evidence" value="ECO:0007669"/>
    <property type="project" value="RHEA"/>
</dbReference>
<dbReference type="GO" id="GO:0004849">
    <property type="term" value="F:uridine kinase activity"/>
    <property type="evidence" value="ECO:0007669"/>
    <property type="project" value="UniProtKB-UniRule"/>
</dbReference>
<dbReference type="GO" id="GO:0044211">
    <property type="term" value="P:CTP salvage"/>
    <property type="evidence" value="ECO:0007669"/>
    <property type="project" value="UniProtKB-UniRule"/>
</dbReference>
<dbReference type="GO" id="GO:0044206">
    <property type="term" value="P:UMP salvage"/>
    <property type="evidence" value="ECO:0007669"/>
    <property type="project" value="UniProtKB-UniRule"/>
</dbReference>
<dbReference type="CDD" id="cd02023">
    <property type="entry name" value="UMPK"/>
    <property type="match status" value="1"/>
</dbReference>
<dbReference type="FunFam" id="3.40.50.300:FF:001802">
    <property type="entry name" value="Uridine-cytidine kinase 1"/>
    <property type="match status" value="1"/>
</dbReference>
<dbReference type="Gene3D" id="3.40.50.300">
    <property type="entry name" value="P-loop containing nucleotide triphosphate hydrolases"/>
    <property type="match status" value="1"/>
</dbReference>
<dbReference type="HAMAP" id="MF_00551">
    <property type="entry name" value="Uridine_kinase"/>
    <property type="match status" value="1"/>
</dbReference>
<dbReference type="InterPro" id="IPR027417">
    <property type="entry name" value="P-loop_NTPase"/>
</dbReference>
<dbReference type="InterPro" id="IPR006083">
    <property type="entry name" value="PRK/URK"/>
</dbReference>
<dbReference type="InterPro" id="IPR026008">
    <property type="entry name" value="Uridine_kinase"/>
</dbReference>
<dbReference type="InterPro" id="IPR000764">
    <property type="entry name" value="Uridine_kinase-like"/>
</dbReference>
<dbReference type="NCBIfam" id="NF004018">
    <property type="entry name" value="PRK05480.1"/>
    <property type="match status" value="1"/>
</dbReference>
<dbReference type="NCBIfam" id="TIGR00235">
    <property type="entry name" value="udk"/>
    <property type="match status" value="1"/>
</dbReference>
<dbReference type="PANTHER" id="PTHR10285">
    <property type="entry name" value="URIDINE KINASE"/>
    <property type="match status" value="1"/>
</dbReference>
<dbReference type="Pfam" id="PF00485">
    <property type="entry name" value="PRK"/>
    <property type="match status" value="1"/>
</dbReference>
<dbReference type="PRINTS" id="PR00988">
    <property type="entry name" value="URIDINKINASE"/>
</dbReference>
<dbReference type="SUPFAM" id="SSF52540">
    <property type="entry name" value="P-loop containing nucleoside triphosphate hydrolases"/>
    <property type="match status" value="1"/>
</dbReference>
<gene>
    <name evidence="1" type="primary">udk</name>
    <name type="ordered locus">NT01CX_2269</name>
</gene>
<proteinExistence type="inferred from homology"/>